<reference key="1">
    <citation type="journal article" date="2000" name="Gene">
        <title>Cloning and characterization of the genes encoding the ankyrin repeat and SOCS box-containing proteins Asb-1, Asb-2, Asb-3 and Asb-4.</title>
        <authorList>
            <person name="Kile B.T."/>
            <person name="Viney E.M."/>
            <person name="Willson T.A."/>
            <person name="Brodnicki T.C."/>
            <person name="Cancilla M.R."/>
            <person name="Herlihy A.S."/>
            <person name="Croker B.A."/>
            <person name="Baca M."/>
            <person name="Nicola N.A."/>
            <person name="Hilton D.J."/>
            <person name="Alexander W.S."/>
        </authorList>
    </citation>
    <scope>NUCLEOTIDE SEQUENCE [MRNA]</scope>
    <scope>TISSUE SPECIFICITY</scope>
    <source>
        <strain>C57BL/6J</strain>
    </source>
</reference>
<reference key="2">
    <citation type="journal article" date="2001" name="Mol. Cell. Biol.">
        <title>Functional analysis of Asb-1 using genetic modification in mice.</title>
        <authorList>
            <person name="Kile B.T."/>
            <person name="Metcalf D."/>
            <person name="Mifsud S."/>
            <person name="DiRago L."/>
            <person name="Nicola N.A."/>
            <person name="Hilton D.J."/>
            <person name="Alexander W.S."/>
        </authorList>
    </citation>
    <scope>FUNCTION</scope>
    <scope>TISSUE SPECIFICITY</scope>
    <scope>DISRUPTION PHENOTYPE</scope>
</reference>
<reference key="3">
    <citation type="journal article" date="2021" name="Proc. Natl. Acad. Sci. U.S.A.">
        <title>An unconventional role of an ASB family protein in NF-kappaB activation and inflammatory response during microbial infection and colitis.</title>
        <authorList>
            <person name="Hou P."/>
            <person name="Jia P."/>
            <person name="Yang K."/>
            <person name="Li Z."/>
            <person name="Tian T."/>
            <person name="Lin Y."/>
            <person name="Zeng W."/>
            <person name="Xing F."/>
            <person name="Chen Y."/>
            <person name="Li C."/>
            <person name="Liu Y."/>
            <person name="Guo D."/>
        </authorList>
    </citation>
    <scope>FUNCTION</scope>
    <scope>DISRUPTION PHENOTYPE</scope>
</reference>
<keyword id="KW-0040">ANK repeat</keyword>
<keyword id="KW-0217">Developmental protein</keyword>
<keyword id="KW-1185">Reference proteome</keyword>
<keyword id="KW-0677">Repeat</keyword>
<keyword id="KW-0833">Ubl conjugation pathway</keyword>
<proteinExistence type="evidence at transcript level"/>
<feature type="chain" id="PRO_0000066924" description="Ankyrin repeat and SOCS box protein 1">
    <location>
        <begin position="1"/>
        <end position="336"/>
    </location>
</feature>
<feature type="repeat" description="ANK 1">
    <location>
        <begin position="37"/>
        <end position="69"/>
    </location>
</feature>
<feature type="repeat" description="ANK 2">
    <location>
        <begin position="78"/>
        <end position="107"/>
    </location>
</feature>
<feature type="repeat" description="ANK 3">
    <location>
        <begin position="111"/>
        <end position="140"/>
    </location>
</feature>
<feature type="repeat" description="ANK 4">
    <location>
        <begin position="144"/>
        <end position="173"/>
    </location>
</feature>
<feature type="repeat" description="ANK 5">
    <location>
        <begin position="192"/>
        <end position="221"/>
    </location>
</feature>
<feature type="repeat" description="ANK 6">
    <location>
        <begin position="236"/>
        <end position="266"/>
    </location>
</feature>
<feature type="domain" description="SOCS box" evidence="3">
    <location>
        <begin position="287"/>
        <end position="336"/>
    </location>
</feature>
<dbReference type="EMBL" id="AF155352">
    <property type="protein sequence ID" value="AAD38808.1"/>
    <property type="molecule type" value="mRNA"/>
</dbReference>
<dbReference type="CCDS" id="CCDS35665.1"/>
<dbReference type="RefSeq" id="NP_001034215.1">
    <property type="nucleotide sequence ID" value="NM_001039126.2"/>
</dbReference>
<dbReference type="SMR" id="Q9WV74"/>
<dbReference type="BioGRID" id="211142">
    <property type="interactions" value="3"/>
</dbReference>
<dbReference type="FunCoup" id="Q9WV74">
    <property type="interactions" value="109"/>
</dbReference>
<dbReference type="IntAct" id="Q9WV74">
    <property type="interactions" value="2"/>
</dbReference>
<dbReference type="STRING" id="10090.ENSMUSP00000084054"/>
<dbReference type="PhosphoSitePlus" id="Q9WV74"/>
<dbReference type="PaxDb" id="10090-ENSMUSP00000084054"/>
<dbReference type="ProteomicsDB" id="283183"/>
<dbReference type="Antibodypedia" id="1137">
    <property type="antibodies" value="31 antibodies from 13 providers"/>
</dbReference>
<dbReference type="DNASU" id="65247"/>
<dbReference type="Ensembl" id="ENSMUST00000086843.11">
    <property type="protein sequence ID" value="ENSMUSP00000084054.6"/>
    <property type="gene ID" value="ENSMUSG00000026311.17"/>
</dbReference>
<dbReference type="GeneID" id="65247"/>
<dbReference type="KEGG" id="mmu:65247"/>
<dbReference type="UCSC" id="uc007caz.1">
    <property type="organism name" value="mouse"/>
</dbReference>
<dbReference type="AGR" id="MGI:1929735"/>
<dbReference type="CTD" id="51665"/>
<dbReference type="MGI" id="MGI:1929735">
    <property type="gene designation" value="Asb1"/>
</dbReference>
<dbReference type="VEuPathDB" id="HostDB:ENSMUSG00000026311"/>
<dbReference type="eggNOG" id="KOG0504">
    <property type="taxonomic scope" value="Eukaryota"/>
</dbReference>
<dbReference type="GeneTree" id="ENSGT00940000153969"/>
<dbReference type="HOGENOM" id="CLU_053981_0_0_1"/>
<dbReference type="InParanoid" id="Q9WV74"/>
<dbReference type="OMA" id="AYHHLEC"/>
<dbReference type="OrthoDB" id="4735278at2759"/>
<dbReference type="PhylomeDB" id="Q9WV74"/>
<dbReference type="TreeFam" id="TF331945"/>
<dbReference type="Reactome" id="R-MMU-8951664">
    <property type="pathway name" value="Neddylation"/>
</dbReference>
<dbReference type="Reactome" id="R-MMU-983168">
    <property type="pathway name" value="Antigen processing: Ubiquitination &amp; Proteasome degradation"/>
</dbReference>
<dbReference type="UniPathway" id="UPA00143"/>
<dbReference type="BioGRID-ORCS" id="65247">
    <property type="hits" value="0 hits in 79 CRISPR screens"/>
</dbReference>
<dbReference type="PRO" id="PR:Q9WV74"/>
<dbReference type="Proteomes" id="UP000000589">
    <property type="component" value="Chromosome 1"/>
</dbReference>
<dbReference type="RNAct" id="Q9WV74">
    <property type="molecule type" value="protein"/>
</dbReference>
<dbReference type="Bgee" id="ENSMUSG00000026311">
    <property type="expression patterns" value="Expressed in blood and 207 other cell types or tissues"/>
</dbReference>
<dbReference type="ExpressionAtlas" id="Q9WV74">
    <property type="expression patterns" value="baseline and differential"/>
</dbReference>
<dbReference type="GO" id="GO:0000151">
    <property type="term" value="C:ubiquitin ligase complex"/>
    <property type="evidence" value="ECO:0007669"/>
    <property type="project" value="Ensembl"/>
</dbReference>
<dbReference type="GO" id="GO:0061630">
    <property type="term" value="F:ubiquitin protein ligase activity"/>
    <property type="evidence" value="ECO:0007669"/>
    <property type="project" value="Ensembl"/>
</dbReference>
<dbReference type="GO" id="GO:0035556">
    <property type="term" value="P:intracellular signal transduction"/>
    <property type="evidence" value="ECO:0007669"/>
    <property type="project" value="InterPro"/>
</dbReference>
<dbReference type="GO" id="GO:0030539">
    <property type="term" value="P:male genitalia development"/>
    <property type="evidence" value="ECO:0000315"/>
    <property type="project" value="MGI"/>
</dbReference>
<dbReference type="GO" id="GO:0016567">
    <property type="term" value="P:protein ubiquitination"/>
    <property type="evidence" value="ECO:0007669"/>
    <property type="project" value="UniProtKB-UniPathway"/>
</dbReference>
<dbReference type="CDD" id="cd03720">
    <property type="entry name" value="SOCS_ASB1"/>
    <property type="match status" value="1"/>
</dbReference>
<dbReference type="FunFam" id="1.10.750.20:FF:000001">
    <property type="entry name" value="Ankyrin repeat and SOCS box containing 1"/>
    <property type="match status" value="1"/>
</dbReference>
<dbReference type="FunFam" id="1.25.40.20:FF:000119">
    <property type="entry name" value="Ankyrin repeat and SOCS box containing 1"/>
    <property type="match status" value="1"/>
</dbReference>
<dbReference type="Gene3D" id="1.25.40.20">
    <property type="entry name" value="Ankyrin repeat-containing domain"/>
    <property type="match status" value="1"/>
</dbReference>
<dbReference type="Gene3D" id="1.10.750.20">
    <property type="entry name" value="SOCS box"/>
    <property type="match status" value="1"/>
</dbReference>
<dbReference type="InterPro" id="IPR002110">
    <property type="entry name" value="Ankyrin_rpt"/>
</dbReference>
<dbReference type="InterPro" id="IPR036770">
    <property type="entry name" value="Ankyrin_rpt-contain_sf"/>
</dbReference>
<dbReference type="InterPro" id="IPR037331">
    <property type="entry name" value="ASB1_SOCS"/>
</dbReference>
<dbReference type="InterPro" id="IPR001496">
    <property type="entry name" value="SOCS_box"/>
</dbReference>
<dbReference type="InterPro" id="IPR036036">
    <property type="entry name" value="SOCS_box-like_dom_sf"/>
</dbReference>
<dbReference type="PANTHER" id="PTHR24173:SF27">
    <property type="entry name" value="ANKYRIN REPEAT AND SOCS BOX PROTEIN 1"/>
    <property type="match status" value="1"/>
</dbReference>
<dbReference type="PANTHER" id="PTHR24173">
    <property type="entry name" value="ANKYRIN REPEAT CONTAINING"/>
    <property type="match status" value="1"/>
</dbReference>
<dbReference type="Pfam" id="PF00023">
    <property type="entry name" value="Ank"/>
    <property type="match status" value="1"/>
</dbReference>
<dbReference type="Pfam" id="PF12796">
    <property type="entry name" value="Ank_2"/>
    <property type="match status" value="1"/>
</dbReference>
<dbReference type="Pfam" id="PF13606">
    <property type="entry name" value="Ank_3"/>
    <property type="match status" value="1"/>
</dbReference>
<dbReference type="Pfam" id="PF07525">
    <property type="entry name" value="SOCS_box"/>
    <property type="match status" value="1"/>
</dbReference>
<dbReference type="PRINTS" id="PR01415">
    <property type="entry name" value="ANKYRIN"/>
</dbReference>
<dbReference type="SMART" id="SM00248">
    <property type="entry name" value="ANK"/>
    <property type="match status" value="5"/>
</dbReference>
<dbReference type="SMART" id="SM00969">
    <property type="entry name" value="SOCS_box"/>
    <property type="match status" value="1"/>
</dbReference>
<dbReference type="SUPFAM" id="SSF48403">
    <property type="entry name" value="Ankyrin repeat"/>
    <property type="match status" value="1"/>
</dbReference>
<dbReference type="SUPFAM" id="SSF158235">
    <property type="entry name" value="SOCS box-like"/>
    <property type="match status" value="1"/>
</dbReference>
<dbReference type="PROSITE" id="PS50297">
    <property type="entry name" value="ANK_REP_REGION"/>
    <property type="match status" value="1"/>
</dbReference>
<dbReference type="PROSITE" id="PS50088">
    <property type="entry name" value="ANK_REPEAT"/>
    <property type="match status" value="3"/>
</dbReference>
<dbReference type="PROSITE" id="PS50225">
    <property type="entry name" value="SOCS"/>
    <property type="match status" value="1"/>
</dbReference>
<organism>
    <name type="scientific">Mus musculus</name>
    <name type="common">Mouse</name>
    <dbReference type="NCBI Taxonomy" id="10090"/>
    <lineage>
        <taxon>Eukaryota</taxon>
        <taxon>Metazoa</taxon>
        <taxon>Chordata</taxon>
        <taxon>Craniata</taxon>
        <taxon>Vertebrata</taxon>
        <taxon>Euteleostomi</taxon>
        <taxon>Mammalia</taxon>
        <taxon>Eutheria</taxon>
        <taxon>Euarchontoglires</taxon>
        <taxon>Glires</taxon>
        <taxon>Rodentia</taxon>
        <taxon>Myomorpha</taxon>
        <taxon>Muroidea</taxon>
        <taxon>Muridae</taxon>
        <taxon>Murinae</taxon>
        <taxon>Mus</taxon>
        <taxon>Mus</taxon>
    </lineage>
</organism>
<evidence type="ECO:0000250" key="1"/>
<evidence type="ECO:0000250" key="2">
    <source>
        <dbReference type="UniProtKB" id="Q9Y576"/>
    </source>
</evidence>
<evidence type="ECO:0000255" key="3">
    <source>
        <dbReference type="PROSITE-ProRule" id="PRU00194"/>
    </source>
</evidence>
<evidence type="ECO:0000269" key="4">
    <source>
    </source>
</evidence>
<evidence type="ECO:0000269" key="5">
    <source>
    </source>
</evidence>
<evidence type="ECO:0000269" key="6">
    <source>
    </source>
</evidence>
<evidence type="ECO:0000305" key="7"/>
<accession>Q9WV74</accession>
<protein>
    <recommendedName>
        <fullName>Ankyrin repeat and SOCS box protein 1</fullName>
        <shortName>ASB-1</shortName>
    </recommendedName>
</protein>
<gene>
    <name type="primary">Asb1</name>
</gene>
<sequence>MAEGGTGPDGRAGPGPAGPNLKEWLREQFCDHPLEHCDDTRLHDAAYVGDLQTLRNLLQEESYRSRINEKSVWCCGWLPCTPLRIAATAGHGNCVDFLIRKGAEVDLVDVKGQTALYVAVVNGHLESTEILLEAGADPNGSRHHRSTPVYHASRVGRDDILKALIRYGADVDVNHHLTPDTRPPFSRRLTSLVVCPLYISAAYHNLQCFRLLLQAGANPDFNCNGPVNTQEFYRGSPGCVMDAVLRHGCEAAFVSLLVEFGANLNLVKWESLGPEARGRRKMDPEALQVFKEARSIPRTLLSLCRVAVRRALGKYRLHLVPSLPLPDPIKKFLLYE</sequence>
<name>ASB1_MOUSE</name>
<comment type="function">
    <text evidence="2 5">Probable substrate-recognition component of a SCF-like ECS (Elongin-Cullin-SOCS-box protein) E3 ligase complex which mediates the ubiquitination and subsequent proteasomal degradation of target proteins (By similarity). Mediates Notch-induced ubiquitination and degradation of TCF3/E2A and JAK2 (By similarity). May play a role in testis development (PubMed:11509662).</text>
</comment>
<comment type="pathway">
    <text>Protein modification; protein ubiquitination.</text>
</comment>
<comment type="subunit">
    <text evidence="1">Interacts with CUL5 and RNF7.</text>
</comment>
<comment type="tissue specificity">
    <text evidence="4 5">Highest expression in testis, spleen, bone marrow and salivary gland.</text>
</comment>
<comment type="domain">
    <text evidence="1">The SOCS box domain mediates the interaction with the Elongin BC complex, an adapter module in different E3 ubiquitin-protein ligase complexes.</text>
</comment>
<comment type="disruption phenotype">
    <text evidence="5 6">Decreased spermatogenesis with less complete filling of seminiferous tubules but fertility does not appear to be affected (PubMed:11509662). Deletion mutant mice exhibit less severe colitis associated with less decreased body weight and longer colon length compared with control littermates after being orally fed with dextran sodium sulfate (PubMed:33431678).</text>
</comment>
<comment type="similarity">
    <text evidence="7">Belongs to the ankyrin SOCS box (ASB) family.</text>
</comment>